<proteinExistence type="evidence at protein level"/>
<keyword id="KW-0002">3D-structure</keyword>
<keyword id="KW-0007">Acetylation</keyword>
<keyword id="KW-0966">Cell projection</keyword>
<keyword id="KW-0969">Cilium</keyword>
<keyword id="KW-0963">Cytoplasm</keyword>
<keyword id="KW-0282">Flagellum</keyword>
<keyword id="KW-0445">Lipid transport</keyword>
<keyword id="KW-0446">Lipid-binding</keyword>
<keyword id="KW-0472">Membrane</keyword>
<keyword id="KW-0597">Phosphoprotein</keyword>
<keyword id="KW-1267">Proteomics identification</keyword>
<keyword id="KW-1185">Reference proteome</keyword>
<keyword id="KW-0813">Transport</keyword>
<comment type="function">
    <text evidence="1 5">May play metabolic roles in sperm maturation or fertilization (By similarity). Phospholipid transfer protein that preferentially selects lipid species containing a palmitoyl or stearoyl chain on the sn-1 and an unsaturated fatty acyl chain (18:1 or 18:2) on the sn-2 position. Able to transfer phosphatidylcholine (PC) and phosphatidyetanolamline (PE) between membranes.</text>
</comment>
<comment type="interaction">
    <interactant intactId="EBI-4289836">
        <id>Q9Y365</id>
    </interactant>
    <interactant intactId="EBI-912440">
        <id>Q96LA8</id>
        <label>PRMT6</label>
    </interactant>
    <organismsDiffer>false</organismsDiffer>
    <experiments>2</experiments>
</comment>
<comment type="subcellular location">
    <subcellularLocation>
        <location evidence="1">Cell projection</location>
        <location evidence="1">Cilium</location>
        <location evidence="1">Flagellum</location>
    </subcellularLocation>
    <subcellularLocation>
        <location evidence="6">Cytoplasm</location>
    </subcellularLocation>
    <subcellularLocation>
        <location evidence="6">Membrane</location>
    </subcellularLocation>
    <text evidence="1">In testis was predominantly detected at the flagella of elongated spermatids, with a strong signal also found at the tail of epididymal sperm (By similarity). Mainly cytosolic.</text>
</comment>
<comment type="PTM">
    <text evidence="6">Phosphorylation at Ser-284 by CK2 negatively regulates lipid transfer activity, possibly by decreasing membrane association.</text>
</comment>
<comment type="sequence caution" evidence="7">
    <conflict type="miscellaneous discrepancy">
        <sequence resource="EMBL-CDS" id="AAC18045"/>
    </conflict>
    <text>Various sequencing problems as well as a translation in a wrong frame.</text>
</comment>
<comment type="sequence caution" evidence="7">
    <conflict type="erroneous initiation">
        <sequence resource="EMBL-CDS" id="AAD34047"/>
    </conflict>
</comment>
<reference key="1">
    <citation type="journal article" date="2000" name="Genome Res.">
        <title>Identification of novel human genes evolutionarily conserved in Caenorhabditis elegans by comparative proteomics.</title>
        <authorList>
            <person name="Lai C.-H."/>
            <person name="Chou C.-Y."/>
            <person name="Ch'ang L.-Y."/>
            <person name="Liu C.-S."/>
            <person name="Lin W.-C."/>
        </authorList>
    </citation>
    <scope>NUCLEOTIDE SEQUENCE [LARGE SCALE MRNA]</scope>
</reference>
<reference key="2">
    <citation type="journal article" date="2004" name="Genome Res.">
        <title>The status, quality, and expansion of the NIH full-length cDNA project: the Mammalian Gene Collection (MGC).</title>
        <authorList>
            <consortium name="The MGC Project Team"/>
        </authorList>
    </citation>
    <scope>NUCLEOTIDE SEQUENCE [LARGE SCALE MRNA]</scope>
    <source>
        <tissue>Uterus</tissue>
    </source>
</reference>
<reference key="3">
    <citation type="journal article" date="1998" name="Int. J. Cancer">
        <title>Characterization of human colon cancer antigens recognized by autologous antibodies.</title>
        <authorList>
            <person name="Scanlan M.J."/>
            <person name="Chen Y.-T."/>
            <person name="Williamson B."/>
            <person name="Gure A.O."/>
            <person name="Stockert E."/>
            <person name="Gordan J.D."/>
            <person name="Tuereci O."/>
            <person name="Sahin U."/>
            <person name="Pfreundschuh M."/>
            <person name="Old L.J."/>
        </authorList>
    </citation>
    <scope>PARTIAL NUCLEOTIDE SEQUENCE [MRNA]</scope>
    <source>
        <tissue>Colon carcinoma</tissue>
    </source>
</reference>
<reference key="4">
    <citation type="journal article" date="2005" name="J. Biol. Chem.">
        <title>StarD10, a START domain protein overexpressed in breast cancer, functions as a phospholipid transfer protein.</title>
        <authorList>
            <person name="Olayioye M.A."/>
            <person name="Vehring S."/>
            <person name="Muller P."/>
            <person name="Herrmann A."/>
            <person name="Schiller J."/>
            <person name="Thiele C."/>
            <person name="Lindeman G.J."/>
            <person name="Visvader J.E."/>
            <person name="Pomorski T."/>
        </authorList>
    </citation>
    <scope>FUNCTION</scope>
    <scope>LIPID-BINDING</scope>
</reference>
<reference key="5">
    <citation type="journal article" date="2007" name="J. Biol. Chem.">
        <title>Phosphorylation of StarD10 on serine 284 by casein kinase II modulates its lipid transfer activity.</title>
        <authorList>
            <person name="Olayioye M.A."/>
            <person name="Buchholz M."/>
            <person name="Schmid S."/>
            <person name="Schoffler P."/>
            <person name="Hoffmann P."/>
            <person name="Pomorski T."/>
        </authorList>
    </citation>
    <scope>PHOSPHORYLATION AT SER-284</scope>
    <scope>SUBCELLULAR LOCATION</scope>
</reference>
<reference key="6">
    <citation type="journal article" date="2008" name="Proc. Natl. Acad. Sci. U.S.A.">
        <title>A quantitative atlas of mitotic phosphorylation.</title>
        <authorList>
            <person name="Dephoure N."/>
            <person name="Zhou C."/>
            <person name="Villen J."/>
            <person name="Beausoleil S.A."/>
            <person name="Bakalarski C.E."/>
            <person name="Elledge S.J."/>
            <person name="Gygi S.P."/>
        </authorList>
    </citation>
    <scope>IDENTIFICATION BY MASS SPECTROMETRY [LARGE SCALE ANALYSIS]</scope>
    <source>
        <tissue>Cervix carcinoma</tissue>
    </source>
</reference>
<reference key="7">
    <citation type="journal article" date="2011" name="BMC Syst. Biol.">
        <title>Initial characterization of the human central proteome.</title>
        <authorList>
            <person name="Burkard T.R."/>
            <person name="Planyavsky M."/>
            <person name="Kaupe I."/>
            <person name="Breitwieser F.P."/>
            <person name="Buerckstuemmer T."/>
            <person name="Bennett K.L."/>
            <person name="Superti-Furga G."/>
            <person name="Colinge J."/>
        </authorList>
    </citation>
    <scope>IDENTIFICATION BY MASS SPECTROMETRY [LARGE SCALE ANALYSIS]</scope>
</reference>
<reference key="8">
    <citation type="journal article" date="2012" name="Proc. Natl. Acad. Sci. U.S.A.">
        <title>N-terminal acetylome analyses and functional insights of the N-terminal acetyltransferase NatB.</title>
        <authorList>
            <person name="Van Damme P."/>
            <person name="Lasa M."/>
            <person name="Polevoda B."/>
            <person name="Gazquez C."/>
            <person name="Elosegui-Artola A."/>
            <person name="Kim D.S."/>
            <person name="De Juan-Pardo E."/>
            <person name="Demeyer K."/>
            <person name="Hole K."/>
            <person name="Larrea E."/>
            <person name="Timmerman E."/>
            <person name="Prieto J."/>
            <person name="Arnesen T."/>
            <person name="Sherman F."/>
            <person name="Gevaert K."/>
            <person name="Aldabe R."/>
        </authorList>
    </citation>
    <scope>ACETYLATION [LARGE SCALE ANALYSIS] AT MET-1</scope>
    <scope>IDENTIFICATION BY MASS SPECTROMETRY [LARGE SCALE ANALYSIS]</scope>
</reference>
<reference key="9">
    <citation type="journal article" date="2014" name="J. Proteomics">
        <title>An enzyme assisted RP-RPLC approach for in-depth analysis of human liver phosphoproteome.</title>
        <authorList>
            <person name="Bian Y."/>
            <person name="Song C."/>
            <person name="Cheng K."/>
            <person name="Dong M."/>
            <person name="Wang F."/>
            <person name="Huang J."/>
            <person name="Sun D."/>
            <person name="Wang L."/>
            <person name="Ye M."/>
            <person name="Zou H."/>
        </authorList>
    </citation>
    <scope>PHOSPHORYLATION [LARGE SCALE ANALYSIS] AT SER-253; SER-259 AND SER-284</scope>
    <scope>IDENTIFICATION BY MASS SPECTROMETRY [LARGE SCALE ANALYSIS]</scope>
    <source>
        <tissue>Liver</tissue>
    </source>
</reference>
<organism>
    <name type="scientific">Homo sapiens</name>
    <name type="common">Human</name>
    <dbReference type="NCBI Taxonomy" id="9606"/>
    <lineage>
        <taxon>Eukaryota</taxon>
        <taxon>Metazoa</taxon>
        <taxon>Chordata</taxon>
        <taxon>Craniata</taxon>
        <taxon>Vertebrata</taxon>
        <taxon>Euteleostomi</taxon>
        <taxon>Mammalia</taxon>
        <taxon>Eutheria</taxon>
        <taxon>Euarchontoglires</taxon>
        <taxon>Primates</taxon>
        <taxon>Haplorrhini</taxon>
        <taxon>Catarrhini</taxon>
        <taxon>Hominidae</taxon>
        <taxon>Homo</taxon>
    </lineage>
</organism>
<evidence type="ECO:0000250" key="1"/>
<evidence type="ECO:0000250" key="2">
    <source>
        <dbReference type="UniProtKB" id="Q9JMD3"/>
    </source>
</evidence>
<evidence type="ECO:0000255" key="3">
    <source>
        <dbReference type="PROSITE-ProRule" id="PRU00197"/>
    </source>
</evidence>
<evidence type="ECO:0000256" key="4">
    <source>
        <dbReference type="SAM" id="MobiDB-lite"/>
    </source>
</evidence>
<evidence type="ECO:0000269" key="5">
    <source>
    </source>
</evidence>
<evidence type="ECO:0000269" key="6">
    <source>
    </source>
</evidence>
<evidence type="ECO:0000305" key="7"/>
<evidence type="ECO:0007744" key="8">
    <source>
    </source>
</evidence>
<evidence type="ECO:0007744" key="9">
    <source>
    </source>
</evidence>
<evidence type="ECO:0007829" key="10">
    <source>
        <dbReference type="PDB" id="6SER"/>
    </source>
</evidence>
<gene>
    <name type="primary">STARD10</name>
    <name type="synonym">SDCCAG28</name>
    <name type="ORF">CGI-52</name>
</gene>
<sequence>MEKLAASTEPQGPRPVLGRESVQVPDDQDFRSFRSECEAEVGWNLTYSRAGVSVWVQAVEMDRTLHKIKCRMECCDVPAETLYDVLHDIEYRKKWDSNVIETFDIARLTVNADVGYYSWRCPKPLKNRDVITLRSWLPMGADYIIMNYSVKHPKYPPRKDLVRAVSIQTGYLIQSTGPKSCVITYLAQVDPKGSLPKWVVNKSSQFLAPKAMKKMYKACLKYPEWKQKHLPHFKPWLHPEQSPLPSLALSELSVQHADSLENIDESAVAESREERMGGAGGEGSDDDTSLT</sequence>
<protein>
    <recommendedName>
        <fullName>START domain-containing protein 10</fullName>
        <shortName>StARD10</shortName>
    </recommendedName>
    <alternativeName>
        <fullName>Antigen NY-CO-28</fullName>
    </alternativeName>
    <alternativeName>
        <fullName>PCTP-like protein</fullName>
        <shortName>PCTP-L</shortName>
    </alternativeName>
    <alternativeName>
        <fullName>Serologically defined colon cancer antigen 28</fullName>
    </alternativeName>
    <alternativeName>
        <fullName>StAR-related lipid transfer protein 10</fullName>
    </alternativeName>
</protein>
<accession>Q9Y365</accession>
<accession>O60532</accession>
<dbReference type="EMBL" id="AF151810">
    <property type="protein sequence ID" value="AAD34047.1"/>
    <property type="status" value="ALT_INIT"/>
    <property type="molecule type" value="mRNA"/>
</dbReference>
<dbReference type="EMBL" id="BC007919">
    <property type="protein sequence ID" value="AAH07919.1"/>
    <property type="molecule type" value="mRNA"/>
</dbReference>
<dbReference type="EMBL" id="BC014033">
    <property type="protein sequence ID" value="AAH14033.1"/>
    <property type="molecule type" value="mRNA"/>
</dbReference>
<dbReference type="EMBL" id="AF039696">
    <property type="protein sequence ID" value="AAC18045.1"/>
    <property type="status" value="ALT_SEQ"/>
    <property type="molecule type" value="mRNA"/>
</dbReference>
<dbReference type="CCDS" id="CCDS41688.1"/>
<dbReference type="RefSeq" id="NP_006636.2">
    <property type="nucleotide sequence ID" value="NM_006645.3"/>
</dbReference>
<dbReference type="PDB" id="6SER">
    <property type="method" value="X-ray"/>
    <property type="resolution" value="2.30 A"/>
    <property type="chains" value="A=1-291"/>
</dbReference>
<dbReference type="PDBsum" id="6SER"/>
<dbReference type="SMR" id="Q9Y365"/>
<dbReference type="BioGRID" id="116023">
    <property type="interactions" value="16"/>
</dbReference>
<dbReference type="FunCoup" id="Q9Y365">
    <property type="interactions" value="19"/>
</dbReference>
<dbReference type="IntAct" id="Q9Y365">
    <property type="interactions" value="4"/>
</dbReference>
<dbReference type="MINT" id="Q9Y365"/>
<dbReference type="STRING" id="9606.ENSP00000335247"/>
<dbReference type="ChEMBL" id="CHEMBL4523506"/>
<dbReference type="iPTMnet" id="Q9Y365"/>
<dbReference type="PhosphoSitePlus" id="Q9Y365"/>
<dbReference type="BioMuta" id="STARD10"/>
<dbReference type="DMDM" id="25090873"/>
<dbReference type="jPOST" id="Q9Y365"/>
<dbReference type="MassIVE" id="Q9Y365"/>
<dbReference type="PaxDb" id="9606-ENSP00000335247"/>
<dbReference type="PeptideAtlas" id="Q9Y365"/>
<dbReference type="ProteomicsDB" id="85976"/>
<dbReference type="Pumba" id="Q9Y365"/>
<dbReference type="Antibodypedia" id="7866">
    <property type="antibodies" value="146 antibodies from 26 providers"/>
</dbReference>
<dbReference type="DNASU" id="10809"/>
<dbReference type="Ensembl" id="ENST00000334805.11">
    <property type="protein sequence ID" value="ENSP00000335247.6"/>
    <property type="gene ID" value="ENSG00000214530.10"/>
</dbReference>
<dbReference type="Ensembl" id="ENST00000543304.5">
    <property type="protein sequence ID" value="ENSP00000438792.1"/>
    <property type="gene ID" value="ENSG00000214530.10"/>
</dbReference>
<dbReference type="GeneID" id="10809"/>
<dbReference type="KEGG" id="hsa:10809"/>
<dbReference type="MANE-Select" id="ENST00000334805.11">
    <property type="protein sequence ID" value="ENSP00000335247.6"/>
    <property type="RefSeq nucleotide sequence ID" value="NM_006645.3"/>
    <property type="RefSeq protein sequence ID" value="NP_006636.2"/>
</dbReference>
<dbReference type="UCSC" id="uc001osz.4">
    <property type="organism name" value="human"/>
</dbReference>
<dbReference type="AGR" id="HGNC:10666"/>
<dbReference type="CTD" id="10809"/>
<dbReference type="DisGeNET" id="10809"/>
<dbReference type="GeneCards" id="STARD10"/>
<dbReference type="HGNC" id="HGNC:10666">
    <property type="gene designation" value="STARD10"/>
</dbReference>
<dbReference type="HPA" id="ENSG00000214530">
    <property type="expression patterns" value="Tissue enhanced (liver)"/>
</dbReference>
<dbReference type="MIM" id="617382">
    <property type="type" value="gene"/>
</dbReference>
<dbReference type="neXtProt" id="NX_Q9Y365"/>
<dbReference type="OpenTargets" id="ENSG00000214530"/>
<dbReference type="PharmGKB" id="PA35596"/>
<dbReference type="VEuPathDB" id="HostDB:ENSG00000214530"/>
<dbReference type="eggNOG" id="KOG2761">
    <property type="taxonomic scope" value="Eukaryota"/>
</dbReference>
<dbReference type="GeneTree" id="ENSGT00510000047611"/>
<dbReference type="InParanoid" id="Q9Y365"/>
<dbReference type="OMA" id="CRMECKD"/>
<dbReference type="OrthoDB" id="5403181at2759"/>
<dbReference type="PAN-GO" id="Q9Y365">
    <property type="GO annotations" value="4 GO annotations based on evolutionary models"/>
</dbReference>
<dbReference type="PhylomeDB" id="Q9Y365"/>
<dbReference type="TreeFam" id="TF354285"/>
<dbReference type="PathwayCommons" id="Q9Y365"/>
<dbReference type="Reactome" id="R-HSA-1483191">
    <property type="pathway name" value="Synthesis of PC"/>
</dbReference>
<dbReference type="SignaLink" id="Q9Y365"/>
<dbReference type="SIGNOR" id="Q9Y365"/>
<dbReference type="BioGRID-ORCS" id="10809">
    <property type="hits" value="14 hits in 1157 CRISPR screens"/>
</dbReference>
<dbReference type="ChiTaRS" id="STARD10">
    <property type="organism name" value="human"/>
</dbReference>
<dbReference type="GeneWiki" id="STARD10"/>
<dbReference type="GenomeRNAi" id="10809"/>
<dbReference type="Pharos" id="Q9Y365">
    <property type="development level" value="Tbio"/>
</dbReference>
<dbReference type="PRO" id="PR:Q9Y365"/>
<dbReference type="Proteomes" id="UP000005640">
    <property type="component" value="Chromosome 11"/>
</dbReference>
<dbReference type="RNAct" id="Q9Y365">
    <property type="molecule type" value="protein"/>
</dbReference>
<dbReference type="Bgee" id="ENSG00000214530">
    <property type="expression patterns" value="Expressed in right lobe of liver and 180 other cell types or tissues"/>
</dbReference>
<dbReference type="ExpressionAtlas" id="Q9Y365">
    <property type="expression patterns" value="baseline and differential"/>
</dbReference>
<dbReference type="GO" id="GO:0005829">
    <property type="term" value="C:cytosol"/>
    <property type="evidence" value="ECO:0000314"/>
    <property type="project" value="HPA"/>
</dbReference>
<dbReference type="GO" id="GO:0046581">
    <property type="term" value="C:intercellular canaliculus"/>
    <property type="evidence" value="ECO:0000318"/>
    <property type="project" value="GO_Central"/>
</dbReference>
<dbReference type="GO" id="GO:0016020">
    <property type="term" value="C:membrane"/>
    <property type="evidence" value="ECO:0000318"/>
    <property type="project" value="GO_Central"/>
</dbReference>
<dbReference type="GO" id="GO:0005902">
    <property type="term" value="C:microvillus"/>
    <property type="evidence" value="ECO:0000318"/>
    <property type="project" value="GO_Central"/>
</dbReference>
<dbReference type="GO" id="GO:0031514">
    <property type="term" value="C:motile cilium"/>
    <property type="evidence" value="ECO:0007669"/>
    <property type="project" value="UniProtKB-SubCell"/>
</dbReference>
<dbReference type="GO" id="GO:0008289">
    <property type="term" value="F:lipid binding"/>
    <property type="evidence" value="ECO:0007669"/>
    <property type="project" value="UniProtKB-KW"/>
</dbReference>
<dbReference type="GO" id="GO:0006869">
    <property type="term" value="P:lipid transport"/>
    <property type="evidence" value="ECO:0007669"/>
    <property type="project" value="UniProtKB-KW"/>
</dbReference>
<dbReference type="CDD" id="cd08871">
    <property type="entry name" value="START_STARD10-like"/>
    <property type="match status" value="1"/>
</dbReference>
<dbReference type="FunFam" id="3.30.530.20:FF:000008">
    <property type="entry name" value="START domain containing 10"/>
    <property type="match status" value="1"/>
</dbReference>
<dbReference type="Gene3D" id="3.30.530.20">
    <property type="match status" value="1"/>
</dbReference>
<dbReference type="InterPro" id="IPR041951">
    <property type="entry name" value="STARD10_START"/>
</dbReference>
<dbReference type="InterPro" id="IPR023393">
    <property type="entry name" value="START-like_dom_sf"/>
</dbReference>
<dbReference type="InterPro" id="IPR002913">
    <property type="entry name" value="START_lipid-bd_dom"/>
</dbReference>
<dbReference type="InterPro" id="IPR051213">
    <property type="entry name" value="START_lipid_transfer"/>
</dbReference>
<dbReference type="PANTHER" id="PTHR19308">
    <property type="entry name" value="PHOSPHATIDYLCHOLINE TRANSFER PROTEIN"/>
    <property type="match status" value="1"/>
</dbReference>
<dbReference type="PANTHER" id="PTHR19308:SF7">
    <property type="entry name" value="START DOMAIN-CONTAINING PROTEIN 10"/>
    <property type="match status" value="1"/>
</dbReference>
<dbReference type="Pfam" id="PF01852">
    <property type="entry name" value="START"/>
    <property type="match status" value="1"/>
</dbReference>
<dbReference type="SMART" id="SM00234">
    <property type="entry name" value="START"/>
    <property type="match status" value="1"/>
</dbReference>
<dbReference type="SUPFAM" id="SSF55961">
    <property type="entry name" value="Bet v1-like"/>
    <property type="match status" value="1"/>
</dbReference>
<dbReference type="PROSITE" id="PS50848">
    <property type="entry name" value="START"/>
    <property type="match status" value="1"/>
</dbReference>
<name>STA10_HUMAN</name>
<feature type="chain" id="PRO_0000220661" description="START domain-containing protein 10">
    <location>
        <begin position="1"/>
        <end position="291"/>
    </location>
</feature>
<feature type="domain" description="START" evidence="3">
    <location>
        <begin position="14"/>
        <end position="224"/>
    </location>
</feature>
<feature type="region of interest" description="Disordered" evidence="4">
    <location>
        <begin position="1"/>
        <end position="20"/>
    </location>
</feature>
<feature type="region of interest" description="Disordered" evidence="4">
    <location>
        <begin position="260"/>
        <end position="291"/>
    </location>
</feature>
<feature type="modified residue" description="N-acetylmethionine" evidence="8">
    <location>
        <position position="1"/>
    </location>
</feature>
<feature type="modified residue" description="N6-succinyllysine" evidence="2">
    <location>
        <position position="94"/>
    </location>
</feature>
<feature type="modified residue" description="N6-succinyllysine" evidence="2">
    <location>
        <position position="197"/>
    </location>
</feature>
<feature type="modified residue" description="N6-succinyllysine" evidence="2">
    <location>
        <position position="202"/>
    </location>
</feature>
<feature type="modified residue" description="Phosphoserine" evidence="9">
    <location>
        <position position="253"/>
    </location>
</feature>
<feature type="modified residue" description="Phosphoserine" evidence="9">
    <location>
        <position position="259"/>
    </location>
</feature>
<feature type="modified residue" description="Phosphoserine; by CK2" evidence="6 9">
    <location>
        <position position="284"/>
    </location>
</feature>
<feature type="modified residue" description="Phosphoserine" evidence="2">
    <location>
        <position position="289"/>
    </location>
</feature>
<feature type="helix" evidence="10">
    <location>
        <begin position="27"/>
        <end position="38"/>
    </location>
</feature>
<feature type="strand" evidence="10">
    <location>
        <begin position="43"/>
        <end position="49"/>
    </location>
</feature>
<feature type="strand" evidence="10">
    <location>
        <begin position="52"/>
        <end position="57"/>
    </location>
</feature>
<feature type="strand" evidence="10">
    <location>
        <begin position="68"/>
        <end position="77"/>
    </location>
</feature>
<feature type="helix" evidence="10">
    <location>
        <begin position="79"/>
        <end position="87"/>
    </location>
</feature>
<feature type="helix" evidence="10">
    <location>
        <begin position="89"/>
        <end position="95"/>
    </location>
</feature>
<feature type="strand" evidence="10">
    <location>
        <begin position="97"/>
        <end position="109"/>
    </location>
</feature>
<feature type="strand" evidence="10">
    <location>
        <begin position="112"/>
        <end position="119"/>
    </location>
</feature>
<feature type="strand" evidence="10">
    <location>
        <begin position="127"/>
        <end position="139"/>
    </location>
</feature>
<feature type="strand" evidence="10">
    <location>
        <begin position="142"/>
        <end position="151"/>
    </location>
</feature>
<feature type="strand" evidence="10">
    <location>
        <begin position="161"/>
        <end position="163"/>
    </location>
</feature>
<feature type="strand" evidence="10">
    <location>
        <begin position="165"/>
        <end position="175"/>
    </location>
</feature>
<feature type="strand" evidence="10">
    <location>
        <begin position="181"/>
        <end position="190"/>
    </location>
</feature>
<feature type="helix" evidence="10">
    <location>
        <begin position="197"/>
        <end position="227"/>
    </location>
</feature>
<feature type="turn" evidence="10">
    <location>
        <begin position="235"/>
        <end position="237"/>
    </location>
</feature>
<feature type="helix" evidence="10">
    <location>
        <begin position="239"/>
        <end position="241"/>
    </location>
</feature>
<feature type="helix" evidence="10">
    <location>
        <begin position="249"/>
        <end position="251"/>
    </location>
</feature>